<proteinExistence type="inferred from homology"/>
<sequence length="558" mass="62517">MRKGGWWLALGMFSASALATCPDWPPARGRQEISRLHQQIVAWKEDYWRQGASEVSDEVYDQLTLRLAQWRQCFPGTTPEDDDLPPPTGDARHPVAHTGVRKLADEVSVAHWMKNKTDLWIQPKVDGVAVTLVYRQGSLVQAISRGDGLRGEAWTARARQIPALAKVTTGELANSVLQGELFLRRDGHVQQQAGGMNARAKVAGLMMRADAAAALSQLDVFIWAWPDGPSDMRRRQQLLTQAGFKYSGQYTHPVTRVEQVAQWRQRWYRSPLPFVSDGVIVREGREPPGRAWSPGKGEWLAAWKYPPASQVMEVRAIHFSTGRSGRLNVVAQLEPQRLDDKRVQRVNVGSVARWQALDIGVGDQLQISLAGQGIPRIDAVVWRTAERHKPTPPAAKFNALTCYFATPECSEQFLSRLIWLSSKSALDVDGVGEHLWRAIQQQNPMTHIFSWLALTVEQLQAVPGISAARGQHLWHQFDLVRKRPFIRWVLAMGLPVPQGALAQLESENWHLLAAKSEAQWRALPGVGEIRARQLVAFLHHPDVVALAQWLSGQRIPGF</sequence>
<protein>
    <recommendedName>
        <fullName evidence="1">DNA ligase B</fullName>
        <ecNumber evidence="1">6.5.1.2</ecNumber>
    </recommendedName>
    <alternativeName>
        <fullName evidence="1">Polydeoxyribonucleotide synthase [NAD(+)] B</fullName>
    </alternativeName>
</protein>
<evidence type="ECO:0000255" key="1">
    <source>
        <dbReference type="HAMAP-Rule" id="MF_01587"/>
    </source>
</evidence>
<organism>
    <name type="scientific">Klebsiella pneumoniae (strain 342)</name>
    <dbReference type="NCBI Taxonomy" id="507522"/>
    <lineage>
        <taxon>Bacteria</taxon>
        <taxon>Pseudomonadati</taxon>
        <taxon>Pseudomonadota</taxon>
        <taxon>Gammaproteobacteria</taxon>
        <taxon>Enterobacterales</taxon>
        <taxon>Enterobacteriaceae</taxon>
        <taxon>Klebsiella/Raoultella group</taxon>
        <taxon>Klebsiella</taxon>
        <taxon>Klebsiella pneumoniae complex</taxon>
    </lineage>
</organism>
<reference key="1">
    <citation type="journal article" date="2008" name="PLoS Genet.">
        <title>Complete genome sequence of the N2-fixing broad host range endophyte Klebsiella pneumoniae 342 and virulence predictions verified in mice.</title>
        <authorList>
            <person name="Fouts D.E."/>
            <person name="Tyler H.L."/>
            <person name="DeBoy R.T."/>
            <person name="Daugherty S."/>
            <person name="Ren Q."/>
            <person name="Badger J.H."/>
            <person name="Durkin A.S."/>
            <person name="Huot H."/>
            <person name="Shrivastava S."/>
            <person name="Kothari S."/>
            <person name="Dodson R.J."/>
            <person name="Mohamoud Y."/>
            <person name="Khouri H."/>
            <person name="Roesch L.F.W."/>
            <person name="Krogfelt K.A."/>
            <person name="Struve C."/>
            <person name="Triplett E.W."/>
            <person name="Methe B.A."/>
        </authorList>
    </citation>
    <scope>NUCLEOTIDE SEQUENCE [LARGE SCALE GENOMIC DNA]</scope>
    <source>
        <strain>342</strain>
    </source>
</reference>
<gene>
    <name evidence="1" type="primary">ligB</name>
    <name type="ordered locus">KPK_0101</name>
</gene>
<accession>B5XTF0</accession>
<keyword id="KW-0227">DNA damage</keyword>
<keyword id="KW-0234">DNA repair</keyword>
<keyword id="KW-0235">DNA replication</keyword>
<keyword id="KW-0436">Ligase</keyword>
<keyword id="KW-0520">NAD</keyword>
<name>LIGB_KLEP3</name>
<comment type="function">
    <text evidence="1">Catalyzes the formation of phosphodiester linkages between 5'-phosphoryl and 3'-hydroxyl groups in double-stranded DNA using NAD as a coenzyme and as the energy source for the reaction.</text>
</comment>
<comment type="catalytic activity">
    <reaction evidence="1">
        <text>NAD(+) + (deoxyribonucleotide)n-3'-hydroxyl + 5'-phospho-(deoxyribonucleotide)m = (deoxyribonucleotide)n+m + AMP + beta-nicotinamide D-nucleotide.</text>
        <dbReference type="EC" id="6.5.1.2"/>
    </reaction>
</comment>
<comment type="similarity">
    <text evidence="1">Belongs to the NAD-dependent DNA ligase family. LigB subfamily.</text>
</comment>
<feature type="chain" id="PRO_0000381949" description="DNA ligase B">
    <location>
        <begin position="1"/>
        <end position="558"/>
    </location>
</feature>
<feature type="active site" description="N6-AMP-lysine intermediate" evidence="1">
    <location>
        <position position="124"/>
    </location>
</feature>
<dbReference type="EC" id="6.5.1.2" evidence="1"/>
<dbReference type="EMBL" id="CP000964">
    <property type="protein sequence ID" value="ACI07377.1"/>
    <property type="molecule type" value="Genomic_DNA"/>
</dbReference>
<dbReference type="SMR" id="B5XTF0"/>
<dbReference type="KEGG" id="kpe:KPK_0101"/>
<dbReference type="HOGENOM" id="CLU_489786_0_0_6"/>
<dbReference type="Proteomes" id="UP000001734">
    <property type="component" value="Chromosome"/>
</dbReference>
<dbReference type="GO" id="GO:0003911">
    <property type="term" value="F:DNA ligase (NAD+) activity"/>
    <property type="evidence" value="ECO:0007669"/>
    <property type="project" value="UniProtKB-UniRule"/>
</dbReference>
<dbReference type="GO" id="GO:0006281">
    <property type="term" value="P:DNA repair"/>
    <property type="evidence" value="ECO:0007669"/>
    <property type="project" value="UniProtKB-KW"/>
</dbReference>
<dbReference type="GO" id="GO:0006260">
    <property type="term" value="P:DNA replication"/>
    <property type="evidence" value="ECO:0007669"/>
    <property type="project" value="UniProtKB-KW"/>
</dbReference>
<dbReference type="Gene3D" id="1.10.150.20">
    <property type="entry name" value="5' to 3' exonuclease, C-terminal subdomain"/>
    <property type="match status" value="1"/>
</dbReference>
<dbReference type="Gene3D" id="3.30.470.30">
    <property type="entry name" value="DNA ligase/mRNA capping enzyme"/>
    <property type="match status" value="1"/>
</dbReference>
<dbReference type="Gene3D" id="1.10.287.610">
    <property type="entry name" value="Helix hairpin bin"/>
    <property type="match status" value="1"/>
</dbReference>
<dbReference type="Gene3D" id="2.40.50.140">
    <property type="entry name" value="Nucleic acid-binding proteins"/>
    <property type="match status" value="1"/>
</dbReference>
<dbReference type="HAMAP" id="MF_01587">
    <property type="entry name" value="DNA_ligase_B"/>
    <property type="match status" value="1"/>
</dbReference>
<dbReference type="InterPro" id="IPR020923">
    <property type="entry name" value="DNA_ligase_B"/>
</dbReference>
<dbReference type="InterPro" id="IPR013839">
    <property type="entry name" value="DNAligase_adenylation"/>
</dbReference>
<dbReference type="InterPro" id="IPR013840">
    <property type="entry name" value="DNAligase_N"/>
</dbReference>
<dbReference type="InterPro" id="IPR012340">
    <property type="entry name" value="NA-bd_OB-fold"/>
</dbReference>
<dbReference type="InterPro" id="IPR050326">
    <property type="entry name" value="NAD_dep_DNA_ligaseB"/>
</dbReference>
<dbReference type="InterPro" id="IPR004150">
    <property type="entry name" value="NAD_DNA_ligase_OB"/>
</dbReference>
<dbReference type="InterPro" id="IPR010994">
    <property type="entry name" value="RuvA_2-like"/>
</dbReference>
<dbReference type="NCBIfam" id="NF005987">
    <property type="entry name" value="PRK08097.1"/>
    <property type="match status" value="1"/>
</dbReference>
<dbReference type="PANTHER" id="PTHR47810">
    <property type="entry name" value="DNA LIGASE"/>
    <property type="match status" value="1"/>
</dbReference>
<dbReference type="PANTHER" id="PTHR47810:SF1">
    <property type="entry name" value="DNA LIGASE B"/>
    <property type="match status" value="1"/>
</dbReference>
<dbReference type="Pfam" id="PF01653">
    <property type="entry name" value="DNA_ligase_aden"/>
    <property type="match status" value="1"/>
</dbReference>
<dbReference type="Pfam" id="PF03120">
    <property type="entry name" value="DNA_ligase_OB"/>
    <property type="match status" value="1"/>
</dbReference>
<dbReference type="SMART" id="SM00532">
    <property type="entry name" value="LIGANc"/>
    <property type="match status" value="1"/>
</dbReference>
<dbReference type="SUPFAM" id="SSF56091">
    <property type="entry name" value="DNA ligase/mRNA capping enzyme, catalytic domain"/>
    <property type="match status" value="1"/>
</dbReference>
<dbReference type="SUPFAM" id="SSF50249">
    <property type="entry name" value="Nucleic acid-binding proteins"/>
    <property type="match status" value="1"/>
</dbReference>
<dbReference type="SUPFAM" id="SSF47781">
    <property type="entry name" value="RuvA domain 2-like"/>
    <property type="match status" value="1"/>
</dbReference>